<proteinExistence type="inferred from homology"/>
<accession>C1AL34</accession>
<dbReference type="EMBL" id="AP010918">
    <property type="protein sequence ID" value="BAH25013.1"/>
    <property type="molecule type" value="Genomic_DNA"/>
</dbReference>
<dbReference type="RefSeq" id="WP_003403578.1">
    <property type="nucleotide sequence ID" value="NZ_CP014566.1"/>
</dbReference>
<dbReference type="SMR" id="C1AL34"/>
<dbReference type="GeneID" id="93438601"/>
<dbReference type="KEGG" id="mbt:JTY_0720"/>
<dbReference type="HOGENOM" id="CLU_122625_1_3_11"/>
<dbReference type="GO" id="GO:1990904">
    <property type="term" value="C:ribonucleoprotein complex"/>
    <property type="evidence" value="ECO:0007669"/>
    <property type="project" value="UniProtKB-KW"/>
</dbReference>
<dbReference type="GO" id="GO:0005840">
    <property type="term" value="C:ribosome"/>
    <property type="evidence" value="ECO:0007669"/>
    <property type="project" value="UniProtKB-KW"/>
</dbReference>
<dbReference type="GO" id="GO:0003735">
    <property type="term" value="F:structural constituent of ribosome"/>
    <property type="evidence" value="ECO:0007669"/>
    <property type="project" value="InterPro"/>
</dbReference>
<dbReference type="GO" id="GO:0000049">
    <property type="term" value="F:tRNA binding"/>
    <property type="evidence" value="ECO:0007669"/>
    <property type="project" value="UniProtKB-UniRule"/>
</dbReference>
<dbReference type="GO" id="GO:0006412">
    <property type="term" value="P:translation"/>
    <property type="evidence" value="ECO:0007669"/>
    <property type="project" value="UniProtKB-UniRule"/>
</dbReference>
<dbReference type="FunFam" id="3.30.70.600:FF:000001">
    <property type="entry name" value="30S ribosomal protein S10"/>
    <property type="match status" value="1"/>
</dbReference>
<dbReference type="Gene3D" id="3.30.70.600">
    <property type="entry name" value="Ribosomal protein S10 domain"/>
    <property type="match status" value="1"/>
</dbReference>
<dbReference type="HAMAP" id="MF_00508">
    <property type="entry name" value="Ribosomal_uS10"/>
    <property type="match status" value="1"/>
</dbReference>
<dbReference type="InterPro" id="IPR001848">
    <property type="entry name" value="Ribosomal_uS10"/>
</dbReference>
<dbReference type="InterPro" id="IPR018268">
    <property type="entry name" value="Ribosomal_uS10_CS"/>
</dbReference>
<dbReference type="InterPro" id="IPR027486">
    <property type="entry name" value="Ribosomal_uS10_dom"/>
</dbReference>
<dbReference type="InterPro" id="IPR036838">
    <property type="entry name" value="Ribosomal_uS10_dom_sf"/>
</dbReference>
<dbReference type="NCBIfam" id="NF001861">
    <property type="entry name" value="PRK00596.1"/>
    <property type="match status" value="1"/>
</dbReference>
<dbReference type="NCBIfam" id="TIGR01049">
    <property type="entry name" value="rpsJ_bact"/>
    <property type="match status" value="1"/>
</dbReference>
<dbReference type="PANTHER" id="PTHR11700">
    <property type="entry name" value="30S RIBOSOMAL PROTEIN S10 FAMILY MEMBER"/>
    <property type="match status" value="1"/>
</dbReference>
<dbReference type="Pfam" id="PF00338">
    <property type="entry name" value="Ribosomal_S10"/>
    <property type="match status" value="1"/>
</dbReference>
<dbReference type="PRINTS" id="PR00971">
    <property type="entry name" value="RIBOSOMALS10"/>
</dbReference>
<dbReference type="SMART" id="SM01403">
    <property type="entry name" value="Ribosomal_S10"/>
    <property type="match status" value="1"/>
</dbReference>
<dbReference type="SUPFAM" id="SSF54999">
    <property type="entry name" value="Ribosomal protein S10"/>
    <property type="match status" value="1"/>
</dbReference>
<dbReference type="PROSITE" id="PS00361">
    <property type="entry name" value="RIBOSOMAL_S10"/>
    <property type="match status" value="1"/>
</dbReference>
<evidence type="ECO:0000255" key="1">
    <source>
        <dbReference type="HAMAP-Rule" id="MF_00508"/>
    </source>
</evidence>
<evidence type="ECO:0000305" key="2"/>
<organism>
    <name type="scientific">Mycobacterium bovis (strain BCG / Tokyo 172 / ATCC 35737 / TMC 1019)</name>
    <dbReference type="NCBI Taxonomy" id="561275"/>
    <lineage>
        <taxon>Bacteria</taxon>
        <taxon>Bacillati</taxon>
        <taxon>Actinomycetota</taxon>
        <taxon>Actinomycetes</taxon>
        <taxon>Mycobacteriales</taxon>
        <taxon>Mycobacteriaceae</taxon>
        <taxon>Mycobacterium</taxon>
        <taxon>Mycobacterium tuberculosis complex</taxon>
    </lineage>
</organism>
<name>RS10_MYCBT</name>
<feature type="chain" id="PRO_1000146066" description="Small ribosomal subunit protein uS10">
    <location>
        <begin position="1"/>
        <end position="101"/>
    </location>
</feature>
<gene>
    <name evidence="1" type="primary">rpsJ</name>
    <name type="ordered locus">JTY_0720</name>
</gene>
<protein>
    <recommendedName>
        <fullName evidence="1">Small ribosomal subunit protein uS10</fullName>
    </recommendedName>
    <alternativeName>
        <fullName evidence="2">30S ribosomal protein S10</fullName>
    </alternativeName>
</protein>
<keyword id="KW-0687">Ribonucleoprotein</keyword>
<keyword id="KW-0689">Ribosomal protein</keyword>
<sequence length="101" mass="11431">MAGQKIRIRLKAYDHEAIDASARKIVETVVRTGASVVGPVPLPTEKNVYCVIRSPHKYKDSREHFEMRTHKRLIDIIDPTPKTVDALMRIDLPASVDVNIQ</sequence>
<reference key="1">
    <citation type="journal article" date="2009" name="Vaccine">
        <title>Whole genome sequence analysis of Mycobacterium bovis bacillus Calmette-Guerin (BCG) Tokyo 172: a comparative study of BCG vaccine substrains.</title>
        <authorList>
            <person name="Seki M."/>
            <person name="Honda I."/>
            <person name="Fujita I."/>
            <person name="Yano I."/>
            <person name="Yamamoto S."/>
            <person name="Koyama A."/>
        </authorList>
    </citation>
    <scope>NUCLEOTIDE SEQUENCE [LARGE SCALE GENOMIC DNA]</scope>
    <source>
        <strain>BCG / Tokyo 172 / ATCC 35737 / TMC 1019</strain>
    </source>
</reference>
<comment type="function">
    <text evidence="1">Involved in the binding of tRNA to the ribosomes.</text>
</comment>
<comment type="subunit">
    <text evidence="1">Part of the 30S ribosomal subunit.</text>
</comment>
<comment type="similarity">
    <text evidence="1">Belongs to the universal ribosomal protein uS10 family.</text>
</comment>